<dbReference type="EMBL" id="BA000054">
    <property type="protein sequence ID" value="BAE64122.1"/>
    <property type="molecule type" value="Genomic_DNA"/>
</dbReference>
<dbReference type="EMBL" id="AF036805">
    <property type="protein sequence ID" value="AAC01640.1"/>
    <property type="molecule type" value="Genomic_DNA"/>
</dbReference>
<dbReference type="RefSeq" id="XP_001825255.1">
    <property type="nucleotide sequence ID" value="XM_001825203.2"/>
</dbReference>
<dbReference type="SMR" id="Q2U2U3"/>
<dbReference type="STRING" id="510516.Q2U2U3"/>
<dbReference type="EnsemblFungi" id="BAE64122">
    <property type="protein sequence ID" value="BAE64122"/>
    <property type="gene ID" value="AO090038000317"/>
</dbReference>
<dbReference type="GeneID" id="5997350"/>
<dbReference type="KEGG" id="aor:AO090038000317"/>
<dbReference type="VEuPathDB" id="FungiDB:AO090038000317"/>
<dbReference type="HOGENOM" id="CLU_015718_1_1_1"/>
<dbReference type="OMA" id="WVPRSVN"/>
<dbReference type="OrthoDB" id="29849at5052"/>
<dbReference type="Proteomes" id="UP000006564">
    <property type="component" value="Chromosome 6"/>
</dbReference>
<dbReference type="GO" id="GO:0005737">
    <property type="term" value="C:cytoplasm"/>
    <property type="evidence" value="ECO:0007669"/>
    <property type="project" value="UniProtKB-KW"/>
</dbReference>
<dbReference type="GO" id="GO:0005874">
    <property type="term" value="C:microtubule"/>
    <property type="evidence" value="ECO:0007669"/>
    <property type="project" value="UniProtKB-KW"/>
</dbReference>
<dbReference type="GO" id="GO:0005525">
    <property type="term" value="F:GTP binding"/>
    <property type="evidence" value="ECO:0007669"/>
    <property type="project" value="UniProtKB-KW"/>
</dbReference>
<dbReference type="GO" id="GO:0003924">
    <property type="term" value="F:GTPase activity"/>
    <property type="evidence" value="ECO:0007669"/>
    <property type="project" value="InterPro"/>
</dbReference>
<dbReference type="GO" id="GO:0046872">
    <property type="term" value="F:metal ion binding"/>
    <property type="evidence" value="ECO:0007669"/>
    <property type="project" value="UniProtKB-KW"/>
</dbReference>
<dbReference type="GO" id="GO:0005200">
    <property type="term" value="F:structural constituent of cytoskeleton"/>
    <property type="evidence" value="ECO:0007669"/>
    <property type="project" value="InterPro"/>
</dbReference>
<dbReference type="GO" id="GO:0007017">
    <property type="term" value="P:microtubule-based process"/>
    <property type="evidence" value="ECO:0007669"/>
    <property type="project" value="InterPro"/>
</dbReference>
<dbReference type="CDD" id="cd02187">
    <property type="entry name" value="beta_tubulin"/>
    <property type="match status" value="1"/>
</dbReference>
<dbReference type="FunFam" id="1.10.287.600:FF:000003">
    <property type="entry name" value="Tubulin beta chain"/>
    <property type="match status" value="1"/>
</dbReference>
<dbReference type="FunFam" id="3.30.1330.20:FF:000002">
    <property type="entry name" value="Tubulin beta chain"/>
    <property type="match status" value="1"/>
</dbReference>
<dbReference type="FunFam" id="3.40.50.1440:FF:000009">
    <property type="entry name" value="Tubulin beta chain"/>
    <property type="match status" value="1"/>
</dbReference>
<dbReference type="Gene3D" id="1.10.287.600">
    <property type="entry name" value="Helix hairpin bin"/>
    <property type="match status" value="1"/>
</dbReference>
<dbReference type="Gene3D" id="3.30.1330.20">
    <property type="entry name" value="Tubulin/FtsZ, C-terminal domain"/>
    <property type="match status" value="1"/>
</dbReference>
<dbReference type="Gene3D" id="3.40.50.1440">
    <property type="entry name" value="Tubulin/FtsZ, GTPase domain"/>
    <property type="match status" value="1"/>
</dbReference>
<dbReference type="InterPro" id="IPR013838">
    <property type="entry name" value="Beta-tubulin_BS"/>
</dbReference>
<dbReference type="InterPro" id="IPR002453">
    <property type="entry name" value="Beta_tubulin"/>
</dbReference>
<dbReference type="InterPro" id="IPR008280">
    <property type="entry name" value="Tub_FtsZ_C"/>
</dbReference>
<dbReference type="InterPro" id="IPR000217">
    <property type="entry name" value="Tubulin"/>
</dbReference>
<dbReference type="InterPro" id="IPR037103">
    <property type="entry name" value="Tubulin/FtsZ-like_C"/>
</dbReference>
<dbReference type="InterPro" id="IPR018316">
    <property type="entry name" value="Tubulin/FtsZ_2-layer-sand-dom"/>
</dbReference>
<dbReference type="InterPro" id="IPR036525">
    <property type="entry name" value="Tubulin/FtsZ_GTPase_sf"/>
</dbReference>
<dbReference type="InterPro" id="IPR023123">
    <property type="entry name" value="Tubulin_C"/>
</dbReference>
<dbReference type="InterPro" id="IPR017975">
    <property type="entry name" value="Tubulin_CS"/>
</dbReference>
<dbReference type="InterPro" id="IPR003008">
    <property type="entry name" value="Tubulin_FtsZ_GTPase"/>
</dbReference>
<dbReference type="PANTHER" id="PTHR11588">
    <property type="entry name" value="TUBULIN"/>
    <property type="match status" value="1"/>
</dbReference>
<dbReference type="Pfam" id="PF00091">
    <property type="entry name" value="Tubulin"/>
    <property type="match status" value="1"/>
</dbReference>
<dbReference type="Pfam" id="PF03953">
    <property type="entry name" value="Tubulin_C"/>
    <property type="match status" value="1"/>
</dbReference>
<dbReference type="PRINTS" id="PR01163">
    <property type="entry name" value="BETATUBULIN"/>
</dbReference>
<dbReference type="PRINTS" id="PR01161">
    <property type="entry name" value="TUBULIN"/>
</dbReference>
<dbReference type="SMART" id="SM00864">
    <property type="entry name" value="Tubulin"/>
    <property type="match status" value="1"/>
</dbReference>
<dbReference type="SMART" id="SM00865">
    <property type="entry name" value="Tubulin_C"/>
    <property type="match status" value="1"/>
</dbReference>
<dbReference type="SUPFAM" id="SSF55307">
    <property type="entry name" value="Tubulin C-terminal domain-like"/>
    <property type="match status" value="1"/>
</dbReference>
<dbReference type="SUPFAM" id="SSF52490">
    <property type="entry name" value="Tubulin nucleotide-binding domain-like"/>
    <property type="match status" value="1"/>
</dbReference>
<dbReference type="PROSITE" id="PS00227">
    <property type="entry name" value="TUBULIN"/>
    <property type="match status" value="1"/>
</dbReference>
<dbReference type="PROSITE" id="PS00228">
    <property type="entry name" value="TUBULIN_B_AUTOREG"/>
    <property type="match status" value="1"/>
</dbReference>
<protein>
    <recommendedName>
        <fullName>Tubulin beta chain</fullName>
    </recommendedName>
    <alternativeName>
        <fullName>Beta-tubulin</fullName>
    </alternativeName>
</protein>
<evidence type="ECO:0000250" key="1">
    <source>
        <dbReference type="UniProtKB" id="P68363"/>
    </source>
</evidence>
<evidence type="ECO:0000250" key="2">
    <source>
        <dbReference type="UniProtKB" id="Q13509"/>
    </source>
</evidence>
<evidence type="ECO:0000256" key="3">
    <source>
        <dbReference type="SAM" id="MobiDB-lite"/>
    </source>
</evidence>
<evidence type="ECO:0000305" key="4"/>
<reference key="1">
    <citation type="journal article" date="2005" name="Nature">
        <title>Genome sequencing and analysis of Aspergillus oryzae.</title>
        <authorList>
            <person name="Machida M."/>
            <person name="Asai K."/>
            <person name="Sano M."/>
            <person name="Tanaka T."/>
            <person name="Kumagai T."/>
            <person name="Terai G."/>
            <person name="Kusumoto K."/>
            <person name="Arima T."/>
            <person name="Akita O."/>
            <person name="Kashiwagi Y."/>
            <person name="Abe K."/>
            <person name="Gomi K."/>
            <person name="Horiuchi H."/>
            <person name="Kitamoto K."/>
            <person name="Kobayashi T."/>
            <person name="Takeuchi M."/>
            <person name="Denning D.W."/>
            <person name="Galagan J.E."/>
            <person name="Nierman W.C."/>
            <person name="Yu J."/>
            <person name="Archer D.B."/>
            <person name="Bennett J.W."/>
            <person name="Bhatnagar D."/>
            <person name="Cleveland T.E."/>
            <person name="Fedorova N.D."/>
            <person name="Gotoh O."/>
            <person name="Horikawa H."/>
            <person name="Hosoyama A."/>
            <person name="Ichinomiya M."/>
            <person name="Igarashi R."/>
            <person name="Iwashita K."/>
            <person name="Juvvadi P.R."/>
            <person name="Kato M."/>
            <person name="Kato Y."/>
            <person name="Kin T."/>
            <person name="Kokubun A."/>
            <person name="Maeda H."/>
            <person name="Maeyama N."/>
            <person name="Maruyama J."/>
            <person name="Nagasaki H."/>
            <person name="Nakajima T."/>
            <person name="Oda K."/>
            <person name="Okada K."/>
            <person name="Paulsen I."/>
            <person name="Sakamoto K."/>
            <person name="Sawano T."/>
            <person name="Takahashi M."/>
            <person name="Takase K."/>
            <person name="Terabayashi Y."/>
            <person name="Wortman J.R."/>
            <person name="Yamada O."/>
            <person name="Yamagata Y."/>
            <person name="Anazawa H."/>
            <person name="Hata Y."/>
            <person name="Koide Y."/>
            <person name="Komori T."/>
            <person name="Koyama Y."/>
            <person name="Minetoki T."/>
            <person name="Suharnan S."/>
            <person name="Tanaka A."/>
            <person name="Isono K."/>
            <person name="Kuhara S."/>
            <person name="Ogasawara N."/>
            <person name="Kikuchi H."/>
        </authorList>
    </citation>
    <scope>NUCLEOTIDE SEQUENCE [LARGE SCALE GENOMIC DNA]</scope>
    <source>
        <strain>ATCC 42149 / RIB 40</strain>
    </source>
</reference>
<reference key="2">
    <citation type="journal article" date="1998" name="Proc. Natl. Acad. Sci. U.S.A.">
        <title>Cryptic speciation and recombination in the aflatoxin-producing fungus Aspergillus flavus.</title>
        <authorList>
            <person name="Geiser D.M."/>
            <person name="Pitt J.I."/>
            <person name="Taylor J.W."/>
        </authorList>
    </citation>
    <scope>NUCLEOTIDE SEQUENCE [GENOMIC DNA] OF 91-214</scope>
    <source>
        <strain>NRRL 469</strain>
    </source>
</reference>
<keyword id="KW-0963">Cytoplasm</keyword>
<keyword id="KW-0206">Cytoskeleton</keyword>
<keyword id="KW-0342">GTP-binding</keyword>
<keyword id="KW-0460">Magnesium</keyword>
<keyword id="KW-0479">Metal-binding</keyword>
<keyword id="KW-0493">Microtubule</keyword>
<keyword id="KW-0547">Nucleotide-binding</keyword>
<keyword id="KW-1185">Reference proteome</keyword>
<accession>Q2U2U3</accession>
<accession>O42753</accession>
<feature type="chain" id="PRO_0000233112" description="Tubulin beta chain">
    <location>
        <begin position="1"/>
        <end position="448"/>
    </location>
</feature>
<feature type="region of interest" description="Disordered" evidence="3">
    <location>
        <begin position="425"/>
        <end position="448"/>
    </location>
</feature>
<feature type="compositionally biased region" description="Acidic residues" evidence="3">
    <location>
        <begin position="432"/>
        <end position="448"/>
    </location>
</feature>
<feature type="binding site" evidence="2">
    <location>
        <position position="11"/>
    </location>
    <ligand>
        <name>GTP</name>
        <dbReference type="ChEBI" id="CHEBI:37565"/>
    </ligand>
</feature>
<feature type="binding site" evidence="1">
    <location>
        <position position="69"/>
    </location>
    <ligand>
        <name>GTP</name>
        <dbReference type="ChEBI" id="CHEBI:37565"/>
    </ligand>
</feature>
<feature type="binding site" evidence="1">
    <location>
        <position position="69"/>
    </location>
    <ligand>
        <name>Mg(2+)</name>
        <dbReference type="ChEBI" id="CHEBI:18420"/>
    </ligand>
</feature>
<feature type="binding site" evidence="2">
    <location>
        <position position="138"/>
    </location>
    <ligand>
        <name>GTP</name>
        <dbReference type="ChEBI" id="CHEBI:37565"/>
    </ligand>
</feature>
<feature type="binding site" evidence="2">
    <location>
        <position position="142"/>
    </location>
    <ligand>
        <name>GTP</name>
        <dbReference type="ChEBI" id="CHEBI:37565"/>
    </ligand>
</feature>
<feature type="binding site" evidence="2">
    <location>
        <position position="143"/>
    </location>
    <ligand>
        <name>GTP</name>
        <dbReference type="ChEBI" id="CHEBI:37565"/>
    </ligand>
</feature>
<feature type="binding site" evidence="2">
    <location>
        <position position="144"/>
    </location>
    <ligand>
        <name>GTP</name>
        <dbReference type="ChEBI" id="CHEBI:37565"/>
    </ligand>
</feature>
<feature type="binding site" evidence="2">
    <location>
        <position position="204"/>
    </location>
    <ligand>
        <name>GTP</name>
        <dbReference type="ChEBI" id="CHEBI:37565"/>
    </ligand>
</feature>
<feature type="binding site" evidence="2">
    <location>
        <position position="226"/>
    </location>
    <ligand>
        <name>GTP</name>
        <dbReference type="ChEBI" id="CHEBI:37565"/>
    </ligand>
</feature>
<name>TBB_ASPOR</name>
<comment type="function">
    <text>Tubulin is the major constituent of microtubules, a cylinder consisting of laterally associated linear protofilaments composed of alpha- and beta-tubulin heterodimers. Microtubules grow by the addition of GTP-tubulin dimers to the microtubule end, where a stabilizing cap forms. Below the cap, tubulin dimers are in GDP-bound state, owing to GTPase activity of alpha-tubulin.</text>
</comment>
<comment type="cofactor">
    <cofactor evidence="1">
        <name>Mg(2+)</name>
        <dbReference type="ChEBI" id="CHEBI:18420"/>
    </cofactor>
</comment>
<comment type="subunit">
    <text>Dimer of alpha and beta chains. A typical microtubule is a hollow water-filled tube with an outer diameter of 25 nm and an inner diameter of 15 nM. Alpha-beta heterodimers associate head-to-tail to form protofilaments running lengthwise along the microtubule wall with the beta-tubulin subunit facing the microtubule plus end conferring a structural polarity. Microtubules usually have 13 protofilaments but different protofilament numbers can be found in some organisms and specialized cells.</text>
</comment>
<comment type="subcellular location">
    <subcellularLocation>
        <location>Cytoplasm</location>
        <location>Cytoskeleton</location>
    </subcellularLocation>
</comment>
<comment type="similarity">
    <text evidence="4">Belongs to the tubulin family.</text>
</comment>
<sequence length="448" mass="50056">MREIVHLQTGQCGNQIGAAFWQTISGEHGLDGSGVYNGSSDLQLERMNVYFNEASGNKYVPRAVLVDLEPGTMDAVRAGPFGQLFRPDNFVFGQSGAGNNWAKGHYTEGAELVDQVVDVVRREAEGCDCLQGFQITHSLGGGTGAGMGTLLISKIREEFPDRMMATFSVVPSPKVSDTVVEPYNATLSVHQLVEHSDETFCIDNEALYDICMRTLKLSNPSYGDLNHLVSAVMSGVTTCLRFPGQLNSDLRKLAVNMVPFPRLHFFMVGFAPLTSRGAHSFRAVSVPELTQQMFDPKNMMAASDFRNGRYLTCSAIFRGKVSMKEVEDQMRNIQSKNQTYFVEWIPNNIQTALCSIPPRGLKMSSTFIGNSTSIQELFKRVGDQFTAMFRRKAFLHWYTGEGMDEMEFTEAESNMNDLVSEYQQYQDASISEGEEEYLEEEEPLEHEE</sequence>
<organism>
    <name type="scientific">Aspergillus oryzae (strain ATCC 42149 / RIB 40)</name>
    <name type="common">Yellow koji mold</name>
    <dbReference type="NCBI Taxonomy" id="510516"/>
    <lineage>
        <taxon>Eukaryota</taxon>
        <taxon>Fungi</taxon>
        <taxon>Dikarya</taxon>
        <taxon>Ascomycota</taxon>
        <taxon>Pezizomycotina</taxon>
        <taxon>Eurotiomycetes</taxon>
        <taxon>Eurotiomycetidae</taxon>
        <taxon>Eurotiales</taxon>
        <taxon>Aspergillaceae</taxon>
        <taxon>Aspergillus</taxon>
        <taxon>Aspergillus subgen. Circumdati</taxon>
    </lineage>
</organism>
<gene>
    <name type="primary">benA56</name>
    <name type="ORF">AO090038000317</name>
</gene>
<proteinExistence type="inferred from homology"/>